<reference key="1">
    <citation type="journal article" date="2001" name="J. Biol. Chem.">
        <title>Nickel resistance and chromatin condensation in Saccharomyces cerevisiae expressing a maize high mobility group I/Y protein.</title>
        <authorList>
            <person name="Forzani C."/>
            <person name="Loulergue C."/>
            <person name="Lobreaux S."/>
            <person name="Briat J.-F."/>
            <person name="Lebrun M."/>
        </authorList>
    </citation>
    <scope>NUCLEOTIDE SEQUENCE [MRNA]</scope>
    <scope>SUBCELLULAR LOCATION</scope>
    <scope>MISCELLANEOUS</scope>
    <source>
        <strain>cv. AMO406</strain>
    </source>
</reference>
<reference key="2">
    <citation type="journal article" date="2009" name="Science">
        <title>The B73 maize genome: complexity, diversity, and dynamics.</title>
        <authorList>
            <person name="Schnable P.S."/>
            <person name="Ware D."/>
            <person name="Fulton R.S."/>
            <person name="Stein J.C."/>
            <person name="Wei F."/>
            <person name="Pasternak S."/>
            <person name="Liang C."/>
            <person name="Zhang J."/>
            <person name="Fulton L."/>
            <person name="Graves T.A."/>
            <person name="Minx P."/>
            <person name="Reily A.D."/>
            <person name="Courtney L."/>
            <person name="Kruchowski S.S."/>
            <person name="Tomlinson C."/>
            <person name="Strong C."/>
            <person name="Delehaunty K."/>
            <person name="Fronick C."/>
            <person name="Courtney B."/>
            <person name="Rock S.M."/>
            <person name="Belter E."/>
            <person name="Du F."/>
            <person name="Kim K."/>
            <person name="Abbott R.M."/>
            <person name="Cotton M."/>
            <person name="Levy A."/>
            <person name="Marchetto P."/>
            <person name="Ochoa K."/>
            <person name="Jackson S.M."/>
            <person name="Gillam B."/>
            <person name="Chen W."/>
            <person name="Yan L."/>
            <person name="Higginbotham J."/>
            <person name="Cardenas M."/>
            <person name="Waligorski J."/>
            <person name="Applebaum E."/>
            <person name="Phelps L."/>
            <person name="Falcone J."/>
            <person name="Kanchi K."/>
            <person name="Thane T."/>
            <person name="Scimone A."/>
            <person name="Thane N."/>
            <person name="Henke J."/>
            <person name="Wang T."/>
            <person name="Ruppert J."/>
            <person name="Shah N."/>
            <person name="Rotter K."/>
            <person name="Hodges J."/>
            <person name="Ingenthron E."/>
            <person name="Cordes M."/>
            <person name="Kohlberg S."/>
            <person name="Sgro J."/>
            <person name="Delgado B."/>
            <person name="Mead K."/>
            <person name="Chinwalla A."/>
            <person name="Leonard S."/>
            <person name="Crouse K."/>
            <person name="Collura K."/>
            <person name="Kudrna D."/>
            <person name="Currie J."/>
            <person name="He R."/>
            <person name="Angelova A."/>
            <person name="Rajasekar S."/>
            <person name="Mueller T."/>
            <person name="Lomeli R."/>
            <person name="Scara G."/>
            <person name="Ko A."/>
            <person name="Delaney K."/>
            <person name="Wissotski M."/>
            <person name="Lopez G."/>
            <person name="Campos D."/>
            <person name="Braidotti M."/>
            <person name="Ashley E."/>
            <person name="Golser W."/>
            <person name="Kim H."/>
            <person name="Lee S."/>
            <person name="Lin J."/>
            <person name="Dujmic Z."/>
            <person name="Kim W."/>
            <person name="Talag J."/>
            <person name="Zuccolo A."/>
            <person name="Fan C."/>
            <person name="Sebastian A."/>
            <person name="Kramer M."/>
            <person name="Spiegel L."/>
            <person name="Nascimento L."/>
            <person name="Zutavern T."/>
            <person name="Miller B."/>
            <person name="Ambroise C."/>
            <person name="Muller S."/>
            <person name="Spooner W."/>
            <person name="Narechania A."/>
            <person name="Ren L."/>
            <person name="Wei S."/>
            <person name="Kumari S."/>
            <person name="Faga B."/>
            <person name="Levy M.J."/>
            <person name="McMahan L."/>
            <person name="Van Buren P."/>
            <person name="Vaughn M.W."/>
            <person name="Ying K."/>
            <person name="Yeh C.-T."/>
            <person name="Emrich S.J."/>
            <person name="Jia Y."/>
            <person name="Kalyanaraman A."/>
            <person name="Hsia A.-P."/>
            <person name="Barbazuk W.B."/>
            <person name="Baucom R.S."/>
            <person name="Brutnell T.P."/>
            <person name="Carpita N.C."/>
            <person name="Chaparro C."/>
            <person name="Chia J.-M."/>
            <person name="Deragon J.-M."/>
            <person name="Estill J.C."/>
            <person name="Fu Y."/>
            <person name="Jeddeloh J.A."/>
            <person name="Han Y."/>
            <person name="Lee H."/>
            <person name="Li P."/>
            <person name="Lisch D.R."/>
            <person name="Liu S."/>
            <person name="Liu Z."/>
            <person name="Nagel D.H."/>
            <person name="McCann M.C."/>
            <person name="SanMiguel P."/>
            <person name="Myers A.M."/>
            <person name="Nettleton D."/>
            <person name="Nguyen J."/>
            <person name="Penning B.W."/>
            <person name="Ponnala L."/>
            <person name="Schneider K.L."/>
            <person name="Schwartz D.C."/>
            <person name="Sharma A."/>
            <person name="Soderlund C."/>
            <person name="Springer N.M."/>
            <person name="Sun Q."/>
            <person name="Wang H."/>
            <person name="Waterman M."/>
            <person name="Westerman R."/>
            <person name="Wolfgruber T.K."/>
            <person name="Yang L."/>
            <person name="Yu Y."/>
            <person name="Zhang L."/>
            <person name="Zhou S."/>
            <person name="Zhu Q."/>
            <person name="Bennetzen J.L."/>
            <person name="Dawe R.K."/>
            <person name="Jiang J."/>
            <person name="Jiang N."/>
            <person name="Presting G.G."/>
            <person name="Wessler S.R."/>
            <person name="Aluru S."/>
            <person name="Martienssen R.A."/>
            <person name="Clifton S.W."/>
            <person name="McCombie W.R."/>
            <person name="Wing R.A."/>
            <person name="Wilson R.K."/>
        </authorList>
    </citation>
    <scope>NUCLEOTIDE SEQUENCE [LARGE SCALE GENOMIC DNA]</scope>
    <source>
        <strain>cv. B73</strain>
    </source>
</reference>
<reference key="3">
    <citation type="journal article" date="2000" name="J. Biol. Chem.">
        <title>The high mobility group I/Y protein is hypophosphorylated in endoreduplicating maize endosperm cells and is involved in alleviating histone H1-mediated transcriptional repression.</title>
        <authorList>
            <person name="Zhao J."/>
            <person name="Grafi G."/>
        </authorList>
    </citation>
    <scope>FUNCTION</scope>
    <scope>PHOSPHORYLATION</scope>
</reference>
<reference key="4">
    <citation type="journal article" date="2009" name="Plant Mol. Biol.">
        <title>Insights into corn genes derived from large-scale cDNA sequencing.</title>
        <authorList>
            <person name="Alexandrov N.N."/>
            <person name="Brover V.V."/>
            <person name="Freidin S."/>
            <person name="Troukhan M.E."/>
            <person name="Tatarinova T.V."/>
            <person name="Zhang H."/>
            <person name="Swaller T.J."/>
            <person name="Lu Y.-P."/>
            <person name="Bouck J."/>
            <person name="Flavell R.B."/>
            <person name="Feldmann K.A."/>
        </authorList>
    </citation>
    <scope>NUCLEOTIDE SEQUENCE [LARGE SCALE MRNA]</scope>
</reference>
<reference key="5">
    <citation type="journal article" date="2009" name="Biochim. Biophys. Acta">
        <title>The maize HMGA protein is localized to the nucleolus and can be acetylated in vitro at its globular domain, and phosphorylation by CDK reduces its binding activity to AT-rich DNA.</title>
        <authorList>
            <person name="Zhao J."/>
            <person name="Paul L.K."/>
            <person name="Grafi G."/>
        </authorList>
    </citation>
    <scope>FUNCTION</scope>
    <scope>SUBCELLULAR LOCATION</scope>
    <scope>ACETYLATION</scope>
    <scope>PHOSPHORYLATION</scope>
    <scope>MUTAGENESIS OF 155-SER--PRO-160 AND 170-THR--LYS-173</scope>
</reference>
<proteinExistence type="evidence at protein level"/>
<name>HMGYA_MAIZE</name>
<comment type="function">
    <text evidence="5 7">Binds A/T-rich DNA (e.g. present in the storage gamma-zein gene promoter) with a highly dynamic distribution into the nucleus (PubMed:10864924, PubMed:19781672). Probably involved in endosperm development, during cells shift from a mitotic cycle to endoreduplication leading to massive synthesis of storage proteins (zeins) and starch (PubMed:10864924).</text>
</comment>
<comment type="subcellular location">
    <subcellularLocation>
        <location evidence="3 6 7">Nucleus</location>
        <location evidence="3 6 7">Nucleolus</location>
    </subcellularLocation>
    <text evidence="1">Follows a highly dynamic speckled distribution pattern throughout the chromatin of interphase nuclei.</text>
</comment>
<comment type="PTM">
    <text evidence="5 7">Phosphorylated by CDK, this phosphorylation prevents DNA-binding (PubMed:10864924, PubMed:19781672). Motility is increased when hypophosphorylated (PubMed:10864924).</text>
</comment>
<comment type="PTM">
    <text evidence="7">Acetylated.</text>
</comment>
<comment type="miscellaneous">
    <text evidence="6">Confers resistance to nickel NiSO(4) when expressed in yeast (e.g. S.cerevisiae) by counterbalancing nickel impact on cell cycle associated with an increased chromatin condensation.</text>
</comment>
<comment type="similarity">
    <text evidence="3">Belongs to the histone H1/H5 family.</text>
</comment>
<organism>
    <name type="scientific">Zea mays</name>
    <name type="common">Maize</name>
    <dbReference type="NCBI Taxonomy" id="4577"/>
    <lineage>
        <taxon>Eukaryota</taxon>
        <taxon>Viridiplantae</taxon>
        <taxon>Streptophyta</taxon>
        <taxon>Embryophyta</taxon>
        <taxon>Tracheophyta</taxon>
        <taxon>Spermatophyta</taxon>
        <taxon>Magnoliopsida</taxon>
        <taxon>Liliopsida</taxon>
        <taxon>Poales</taxon>
        <taxon>Poaceae</taxon>
        <taxon>PACMAD clade</taxon>
        <taxon>Panicoideae</taxon>
        <taxon>Andropogonodae</taxon>
        <taxon>Andropogoneae</taxon>
        <taxon>Tripsacinae</taxon>
        <taxon>Zea</taxon>
    </lineage>
</organism>
<keyword id="KW-0007">Acetylation</keyword>
<keyword id="KW-0238">DNA-binding</keyword>
<keyword id="KW-0539">Nucleus</keyword>
<keyword id="KW-0597">Phosphoprotein</keyword>
<keyword id="KW-1185">Reference proteome</keyword>
<keyword id="KW-0677">Repeat</keyword>
<sequence>MATDEATKPSPIPPYPEMILAAIEGLDDKSGSNKSAISKYIEGKYGSLPPAHASLLTAHLARMKESGELVFLKNNYFRAGAPDAPPKRGRGRPPKARDPNAPAPAPKSPSSTGRGRGRPPKAKSPLEAAVKQATAGMPKPRGRPPKKAKTDGAASPSPSPAPAPAGDGSTPGKRGRGRPPKVRPAVPSETAAA</sequence>
<dbReference type="EMBL" id="AF291748">
    <property type="protein sequence ID" value="AAG00601.1"/>
    <property type="molecule type" value="mRNA"/>
</dbReference>
<dbReference type="EMBL" id="CM007647">
    <property type="status" value="NOT_ANNOTATED_CDS"/>
    <property type="molecule type" value="Genomic_DNA"/>
</dbReference>
<dbReference type="EMBL" id="EU952311">
    <property type="protein sequence ID" value="ACG24429.1"/>
    <property type="molecule type" value="mRNA"/>
</dbReference>
<dbReference type="RefSeq" id="NP_001105009.1">
    <property type="nucleotide sequence ID" value="NM_001111539.2"/>
</dbReference>
<dbReference type="SMR" id="Q9FYS5"/>
<dbReference type="FunCoup" id="Q9FYS5">
    <property type="interactions" value="138"/>
</dbReference>
<dbReference type="STRING" id="4577.Q9FYS5"/>
<dbReference type="iPTMnet" id="Q9FYS5"/>
<dbReference type="PaxDb" id="4577-GRMZM2G106133_P02"/>
<dbReference type="EnsemblPlants" id="Zm00001eb041850_T001">
    <property type="protein sequence ID" value="Zm00001eb041850_P001"/>
    <property type="gene ID" value="Zm00001eb041850"/>
</dbReference>
<dbReference type="GeneID" id="541871"/>
<dbReference type="Gramene" id="Zm00001eb041850_T001">
    <property type="protein sequence ID" value="Zm00001eb041850_P001"/>
    <property type="gene ID" value="Zm00001eb041850"/>
</dbReference>
<dbReference type="KEGG" id="zma:541871"/>
<dbReference type="eggNOG" id="ENOG502RXFH">
    <property type="taxonomic scope" value="Eukaryota"/>
</dbReference>
<dbReference type="HOGENOM" id="CLU_078915_0_0_1"/>
<dbReference type="InParanoid" id="Q9FYS5"/>
<dbReference type="OMA" id="KHMDSTH"/>
<dbReference type="OrthoDB" id="1110759at2759"/>
<dbReference type="Proteomes" id="UP000007305">
    <property type="component" value="Chromosome 1"/>
</dbReference>
<dbReference type="ExpressionAtlas" id="Q9FYS5">
    <property type="expression patterns" value="baseline and differential"/>
</dbReference>
<dbReference type="GO" id="GO:0005730">
    <property type="term" value="C:nucleolus"/>
    <property type="evidence" value="ECO:0000314"/>
    <property type="project" value="UniProtKB"/>
</dbReference>
<dbReference type="GO" id="GO:0000786">
    <property type="term" value="C:nucleosome"/>
    <property type="evidence" value="ECO:0007669"/>
    <property type="project" value="InterPro"/>
</dbReference>
<dbReference type="GO" id="GO:0005634">
    <property type="term" value="C:nucleus"/>
    <property type="evidence" value="ECO:0000318"/>
    <property type="project" value="GO_Central"/>
</dbReference>
<dbReference type="GO" id="GO:0003690">
    <property type="term" value="F:double-stranded DNA binding"/>
    <property type="evidence" value="ECO:0000318"/>
    <property type="project" value="GO_Central"/>
</dbReference>
<dbReference type="GO" id="GO:0031492">
    <property type="term" value="F:nucleosomal DNA binding"/>
    <property type="evidence" value="ECO:0000318"/>
    <property type="project" value="GO_Central"/>
</dbReference>
<dbReference type="GO" id="GO:0043565">
    <property type="term" value="F:sequence-specific DNA binding"/>
    <property type="evidence" value="ECO:0000314"/>
    <property type="project" value="UniProtKB"/>
</dbReference>
<dbReference type="GO" id="GO:0030261">
    <property type="term" value="P:chromosome condensation"/>
    <property type="evidence" value="ECO:0000318"/>
    <property type="project" value="GO_Central"/>
</dbReference>
<dbReference type="GO" id="GO:0045910">
    <property type="term" value="P:negative regulation of DNA recombination"/>
    <property type="evidence" value="ECO:0000318"/>
    <property type="project" value="GO_Central"/>
</dbReference>
<dbReference type="GO" id="GO:0006334">
    <property type="term" value="P:nucleosome assembly"/>
    <property type="evidence" value="ECO:0007669"/>
    <property type="project" value="InterPro"/>
</dbReference>
<dbReference type="GO" id="GO:0006355">
    <property type="term" value="P:regulation of DNA-templated transcription"/>
    <property type="evidence" value="ECO:0007669"/>
    <property type="project" value="InterPro"/>
</dbReference>
<dbReference type="GO" id="GO:2000014">
    <property type="term" value="P:regulation of endosperm development"/>
    <property type="evidence" value="ECO:0000270"/>
    <property type="project" value="UniProtKB"/>
</dbReference>
<dbReference type="FunFam" id="1.10.10.10:FF:000537">
    <property type="entry name" value="HMG-Y-related protein A"/>
    <property type="match status" value="1"/>
</dbReference>
<dbReference type="Gene3D" id="1.10.10.10">
    <property type="entry name" value="Winged helix-like DNA-binding domain superfamily/Winged helix DNA-binding domain"/>
    <property type="match status" value="1"/>
</dbReference>
<dbReference type="InterPro" id="IPR017956">
    <property type="entry name" value="AT_hook_DNA-bd_motif"/>
</dbReference>
<dbReference type="InterPro" id="IPR005818">
    <property type="entry name" value="Histone_H1/H5_H15"/>
</dbReference>
<dbReference type="InterPro" id="IPR000116">
    <property type="entry name" value="HMGA"/>
</dbReference>
<dbReference type="InterPro" id="IPR036388">
    <property type="entry name" value="WH-like_DNA-bd_sf"/>
</dbReference>
<dbReference type="InterPro" id="IPR036390">
    <property type="entry name" value="WH_DNA-bd_sf"/>
</dbReference>
<dbReference type="PANTHER" id="PTHR11467">
    <property type="entry name" value="HISTONE H1"/>
    <property type="match status" value="1"/>
</dbReference>
<dbReference type="PANTHER" id="PTHR11467:SF162">
    <property type="entry name" value="HMG-Y-RELATED PROTEIN A"/>
    <property type="match status" value="1"/>
</dbReference>
<dbReference type="Pfam" id="PF02178">
    <property type="entry name" value="AT_hook"/>
    <property type="match status" value="4"/>
</dbReference>
<dbReference type="Pfam" id="PF00538">
    <property type="entry name" value="Linker_histone"/>
    <property type="match status" value="1"/>
</dbReference>
<dbReference type="PRINTS" id="PR00929">
    <property type="entry name" value="ATHOOK"/>
</dbReference>
<dbReference type="PRINTS" id="PR00930">
    <property type="entry name" value="HIGHMOBLTYIY"/>
</dbReference>
<dbReference type="SMART" id="SM00384">
    <property type="entry name" value="AT_hook"/>
    <property type="match status" value="4"/>
</dbReference>
<dbReference type="SMART" id="SM00526">
    <property type="entry name" value="H15"/>
    <property type="match status" value="1"/>
</dbReference>
<dbReference type="SUPFAM" id="SSF46785">
    <property type="entry name" value="Winged helix' DNA-binding domain"/>
    <property type="match status" value="1"/>
</dbReference>
<dbReference type="PROSITE" id="PS51504">
    <property type="entry name" value="H15"/>
    <property type="match status" value="1"/>
</dbReference>
<accession>Q9FYS5</accession>
<gene>
    <name evidence="8" type="primary">HMGIY2</name>
    <name evidence="9" type="ORF">GRMZM2G106133</name>
    <name type="ORF">Zm.66288</name>
</gene>
<protein>
    <recommendedName>
        <fullName>HMG-Y-related protein A</fullName>
        <shortName>ZmHMGA</shortName>
    </recommendedName>
    <alternativeName>
        <fullName>High mobility group A protein</fullName>
    </alternativeName>
</protein>
<feature type="chain" id="PRO_0000434726" description="HMG-Y-related protein A">
    <location>
        <begin position="1"/>
        <end position="193"/>
    </location>
</feature>
<feature type="domain" description="H15" evidence="3">
    <location>
        <begin position="11"/>
        <end position="81"/>
    </location>
</feature>
<feature type="DNA-binding region" description="A.T hook 1" evidence="2">
    <location>
        <begin position="87"/>
        <end position="98"/>
    </location>
</feature>
<feature type="DNA-binding region" description="A.T hook 2" evidence="2">
    <location>
        <begin position="113"/>
        <end position="124"/>
    </location>
</feature>
<feature type="DNA-binding region" description="A.T hook 3" evidence="2">
    <location>
        <begin position="138"/>
        <end position="149"/>
    </location>
</feature>
<feature type="DNA-binding region" description="A.T hook 4" evidence="2">
    <location>
        <begin position="173"/>
        <end position="184"/>
    </location>
</feature>
<feature type="region of interest" description="Disordered" evidence="4">
    <location>
        <begin position="75"/>
        <end position="193"/>
    </location>
</feature>
<feature type="short sequence motif" description="Nuclear localization signal 1 (NLS)" evidence="1">
    <location>
        <begin position="86"/>
        <end position="92"/>
    </location>
</feature>
<feature type="short sequence motif" description="Nuclear localization signal 2 (NLS)" evidence="1">
    <location>
        <begin position="145"/>
        <end position="149"/>
    </location>
</feature>
<feature type="mutagenesis site" description="Impaired phosphorylation." evidence="7">
    <location>
        <begin position="155"/>
        <end position="160"/>
    </location>
</feature>
<feature type="mutagenesis site" description="Impaired phosphorylation." evidence="7">
    <location>
        <begin position="170"/>
        <end position="173"/>
    </location>
</feature>
<evidence type="ECO:0000250" key="1">
    <source>
        <dbReference type="UniProtKB" id="Q43386"/>
    </source>
</evidence>
<evidence type="ECO:0000255" key="2"/>
<evidence type="ECO:0000255" key="3">
    <source>
        <dbReference type="PROSITE-ProRule" id="PRU00837"/>
    </source>
</evidence>
<evidence type="ECO:0000256" key="4">
    <source>
        <dbReference type="SAM" id="MobiDB-lite"/>
    </source>
</evidence>
<evidence type="ECO:0000269" key="5">
    <source>
    </source>
</evidence>
<evidence type="ECO:0000269" key="6">
    <source>
    </source>
</evidence>
<evidence type="ECO:0000269" key="7">
    <source>
    </source>
</evidence>
<evidence type="ECO:0000303" key="8">
    <source>
    </source>
</evidence>
<evidence type="ECO:0000305" key="9"/>